<evidence type="ECO:0000255" key="1">
    <source>
        <dbReference type="HAMAP-Rule" id="MF_00607"/>
    </source>
</evidence>
<accession>Q0BC07</accession>
<dbReference type="EC" id="2.1.1.182" evidence="1"/>
<dbReference type="EMBL" id="CP000440">
    <property type="protein sequence ID" value="ABI88316.1"/>
    <property type="molecule type" value="Genomic_DNA"/>
</dbReference>
<dbReference type="RefSeq" id="WP_011657882.1">
    <property type="nucleotide sequence ID" value="NC_008390.1"/>
</dbReference>
<dbReference type="SMR" id="Q0BC07"/>
<dbReference type="GeneID" id="93085040"/>
<dbReference type="KEGG" id="bam:Bamb_2760"/>
<dbReference type="PATRIC" id="fig|339670.21.peg.2133"/>
<dbReference type="eggNOG" id="COG0030">
    <property type="taxonomic scope" value="Bacteria"/>
</dbReference>
<dbReference type="Proteomes" id="UP000000662">
    <property type="component" value="Chromosome 1"/>
</dbReference>
<dbReference type="GO" id="GO:0005829">
    <property type="term" value="C:cytosol"/>
    <property type="evidence" value="ECO:0007669"/>
    <property type="project" value="TreeGrafter"/>
</dbReference>
<dbReference type="GO" id="GO:0052908">
    <property type="term" value="F:16S rRNA (adenine(1518)-N(6)/adenine(1519)-N(6))-dimethyltransferase activity"/>
    <property type="evidence" value="ECO:0007669"/>
    <property type="project" value="UniProtKB-EC"/>
</dbReference>
<dbReference type="GO" id="GO:0003723">
    <property type="term" value="F:RNA binding"/>
    <property type="evidence" value="ECO:0007669"/>
    <property type="project" value="UniProtKB-KW"/>
</dbReference>
<dbReference type="FunFam" id="1.10.8.100:FF:000001">
    <property type="entry name" value="Ribosomal RNA small subunit methyltransferase A"/>
    <property type="match status" value="1"/>
</dbReference>
<dbReference type="Gene3D" id="1.10.8.100">
    <property type="entry name" value="Ribosomal RNA adenine dimethylase-like, domain 2"/>
    <property type="match status" value="1"/>
</dbReference>
<dbReference type="Gene3D" id="3.40.50.150">
    <property type="entry name" value="Vaccinia Virus protein VP39"/>
    <property type="match status" value="1"/>
</dbReference>
<dbReference type="HAMAP" id="MF_00607">
    <property type="entry name" value="16SrRNA_methyltr_A"/>
    <property type="match status" value="1"/>
</dbReference>
<dbReference type="InterPro" id="IPR001737">
    <property type="entry name" value="KsgA/Erm"/>
</dbReference>
<dbReference type="InterPro" id="IPR023165">
    <property type="entry name" value="rRNA_Ade_diMease-like_C"/>
</dbReference>
<dbReference type="InterPro" id="IPR020598">
    <property type="entry name" value="rRNA_Ade_methylase_Trfase_N"/>
</dbReference>
<dbReference type="InterPro" id="IPR011530">
    <property type="entry name" value="rRNA_adenine_dimethylase"/>
</dbReference>
<dbReference type="InterPro" id="IPR029063">
    <property type="entry name" value="SAM-dependent_MTases_sf"/>
</dbReference>
<dbReference type="NCBIfam" id="TIGR00755">
    <property type="entry name" value="ksgA"/>
    <property type="match status" value="1"/>
</dbReference>
<dbReference type="PANTHER" id="PTHR11727">
    <property type="entry name" value="DIMETHYLADENOSINE TRANSFERASE"/>
    <property type="match status" value="1"/>
</dbReference>
<dbReference type="PANTHER" id="PTHR11727:SF7">
    <property type="entry name" value="DIMETHYLADENOSINE TRANSFERASE-RELATED"/>
    <property type="match status" value="1"/>
</dbReference>
<dbReference type="Pfam" id="PF00398">
    <property type="entry name" value="RrnaAD"/>
    <property type="match status" value="1"/>
</dbReference>
<dbReference type="SMART" id="SM00650">
    <property type="entry name" value="rADc"/>
    <property type="match status" value="1"/>
</dbReference>
<dbReference type="SUPFAM" id="SSF53335">
    <property type="entry name" value="S-adenosyl-L-methionine-dependent methyltransferases"/>
    <property type="match status" value="1"/>
</dbReference>
<dbReference type="PROSITE" id="PS51689">
    <property type="entry name" value="SAM_RNA_A_N6_MT"/>
    <property type="match status" value="1"/>
</dbReference>
<comment type="function">
    <text evidence="1">Specifically dimethylates two adjacent adenosines (A1518 and A1519) in the loop of a conserved hairpin near the 3'-end of 16S rRNA in the 30S particle. May play a critical role in biogenesis of 30S subunits.</text>
</comment>
<comment type="catalytic activity">
    <reaction evidence="1">
        <text>adenosine(1518)/adenosine(1519) in 16S rRNA + 4 S-adenosyl-L-methionine = N(6)-dimethyladenosine(1518)/N(6)-dimethyladenosine(1519) in 16S rRNA + 4 S-adenosyl-L-homocysteine + 4 H(+)</text>
        <dbReference type="Rhea" id="RHEA:19609"/>
        <dbReference type="Rhea" id="RHEA-COMP:10232"/>
        <dbReference type="Rhea" id="RHEA-COMP:10233"/>
        <dbReference type="ChEBI" id="CHEBI:15378"/>
        <dbReference type="ChEBI" id="CHEBI:57856"/>
        <dbReference type="ChEBI" id="CHEBI:59789"/>
        <dbReference type="ChEBI" id="CHEBI:74411"/>
        <dbReference type="ChEBI" id="CHEBI:74493"/>
        <dbReference type="EC" id="2.1.1.182"/>
    </reaction>
</comment>
<comment type="subcellular location">
    <subcellularLocation>
        <location evidence="1">Cytoplasm</location>
    </subcellularLocation>
</comment>
<comment type="similarity">
    <text evidence="1">Belongs to the class I-like SAM-binding methyltransferase superfamily. rRNA adenine N(6)-methyltransferase family. RsmA subfamily.</text>
</comment>
<gene>
    <name evidence="1" type="primary">rsmA</name>
    <name evidence="1" type="synonym">ksgA</name>
    <name type="ordered locus">Bamb_2760</name>
</gene>
<proteinExistence type="inferred from homology"/>
<protein>
    <recommendedName>
        <fullName evidence="1">Ribosomal RNA small subunit methyltransferase A</fullName>
        <ecNumber evidence="1">2.1.1.182</ecNumber>
    </recommendedName>
    <alternativeName>
        <fullName evidence="1">16S rRNA (adenine(1518)-N(6)/adenine(1519)-N(6))-dimethyltransferase</fullName>
    </alternativeName>
    <alternativeName>
        <fullName evidence="1">16S rRNA dimethyladenosine transferase</fullName>
    </alternativeName>
    <alternativeName>
        <fullName evidence="1">16S rRNA dimethylase</fullName>
    </alternativeName>
    <alternativeName>
        <fullName evidence="1">S-adenosylmethionine-6-N', N'-adenosyl(rRNA) dimethyltransferase</fullName>
    </alternativeName>
</protein>
<sequence>MSNSRQHQGHFARKRFGQNFLVDHGVIDSIVTTIGPARGQRMVEIGPGLGALTEPLIARLATPESPLHAVELDRDLIGRLQQRFGPLLELHAGDALAFDFRSLAAPGDKPSLRIVGNLPYNISSPLLFHLMTFADAVIDQHFMLQNEVVERMVAEPGTKAFSRLSVMLQYRYVMEKMLDVPPESFQPPPKVDSAIVRMIPYEPHELPDVDPVLLGELVTAAFSQRRKMLRNTLGDYRETIDFDGLGFDLARRAEDVSVAEYVGVAQALAARRKAAE</sequence>
<keyword id="KW-0963">Cytoplasm</keyword>
<keyword id="KW-0489">Methyltransferase</keyword>
<keyword id="KW-0694">RNA-binding</keyword>
<keyword id="KW-0698">rRNA processing</keyword>
<keyword id="KW-0949">S-adenosyl-L-methionine</keyword>
<keyword id="KW-0808">Transferase</keyword>
<reference key="1">
    <citation type="submission" date="2006-08" db="EMBL/GenBank/DDBJ databases">
        <title>Complete sequence of chromosome 1 of Burkholderia cepacia AMMD.</title>
        <authorList>
            <person name="Copeland A."/>
            <person name="Lucas S."/>
            <person name="Lapidus A."/>
            <person name="Barry K."/>
            <person name="Detter J.C."/>
            <person name="Glavina del Rio T."/>
            <person name="Hammon N."/>
            <person name="Israni S."/>
            <person name="Pitluck S."/>
            <person name="Bruce D."/>
            <person name="Chain P."/>
            <person name="Malfatti S."/>
            <person name="Shin M."/>
            <person name="Vergez L."/>
            <person name="Schmutz J."/>
            <person name="Larimer F."/>
            <person name="Land M."/>
            <person name="Hauser L."/>
            <person name="Kyrpides N."/>
            <person name="Kim E."/>
            <person name="Parke J."/>
            <person name="Coenye T."/>
            <person name="Konstantinidis K."/>
            <person name="Ramette A."/>
            <person name="Tiedje J."/>
            <person name="Richardson P."/>
        </authorList>
    </citation>
    <scope>NUCLEOTIDE SEQUENCE [LARGE SCALE GENOMIC DNA]</scope>
    <source>
        <strain>ATCC BAA-244 / DSM 16087 / CCUG 44356 / LMG 19182 / AMMD</strain>
    </source>
</reference>
<organism>
    <name type="scientific">Burkholderia ambifaria (strain ATCC BAA-244 / DSM 16087 / CCUG 44356 / LMG 19182 / AMMD)</name>
    <name type="common">Burkholderia cepacia (strain AMMD)</name>
    <dbReference type="NCBI Taxonomy" id="339670"/>
    <lineage>
        <taxon>Bacteria</taxon>
        <taxon>Pseudomonadati</taxon>
        <taxon>Pseudomonadota</taxon>
        <taxon>Betaproteobacteria</taxon>
        <taxon>Burkholderiales</taxon>
        <taxon>Burkholderiaceae</taxon>
        <taxon>Burkholderia</taxon>
        <taxon>Burkholderia cepacia complex</taxon>
    </lineage>
</organism>
<feature type="chain" id="PRO_1000056603" description="Ribosomal RNA small subunit methyltransferase A">
    <location>
        <begin position="1"/>
        <end position="276"/>
    </location>
</feature>
<feature type="binding site" evidence="1">
    <location>
        <position position="19"/>
    </location>
    <ligand>
        <name>S-adenosyl-L-methionine</name>
        <dbReference type="ChEBI" id="CHEBI:59789"/>
    </ligand>
</feature>
<feature type="binding site" evidence="1">
    <location>
        <position position="21"/>
    </location>
    <ligand>
        <name>S-adenosyl-L-methionine</name>
        <dbReference type="ChEBI" id="CHEBI:59789"/>
    </ligand>
</feature>
<feature type="binding site" evidence="1">
    <location>
        <position position="46"/>
    </location>
    <ligand>
        <name>S-adenosyl-L-methionine</name>
        <dbReference type="ChEBI" id="CHEBI:59789"/>
    </ligand>
</feature>
<feature type="binding site" evidence="1">
    <location>
        <position position="71"/>
    </location>
    <ligand>
        <name>S-adenosyl-L-methionine</name>
        <dbReference type="ChEBI" id="CHEBI:59789"/>
    </ligand>
</feature>
<feature type="binding site" evidence="1">
    <location>
        <position position="94"/>
    </location>
    <ligand>
        <name>S-adenosyl-L-methionine</name>
        <dbReference type="ChEBI" id="CHEBI:59789"/>
    </ligand>
</feature>
<feature type="binding site" evidence="1">
    <location>
        <position position="117"/>
    </location>
    <ligand>
        <name>S-adenosyl-L-methionine</name>
        <dbReference type="ChEBI" id="CHEBI:59789"/>
    </ligand>
</feature>
<name>RSMA_BURCM</name>